<feature type="chain" id="PRO_0000127249" description="DNA-binding protein inhibitor ID-3">
    <location>
        <begin position="1"/>
        <end position="119"/>
    </location>
</feature>
<feature type="domain" description="bHLH" evidence="2">
    <location>
        <begin position="28"/>
        <end position="80"/>
    </location>
</feature>
<organism>
    <name type="scientific">Rattus norvegicus</name>
    <name type="common">Rat</name>
    <dbReference type="NCBI Taxonomy" id="10116"/>
    <lineage>
        <taxon>Eukaryota</taxon>
        <taxon>Metazoa</taxon>
        <taxon>Chordata</taxon>
        <taxon>Craniata</taxon>
        <taxon>Vertebrata</taxon>
        <taxon>Euteleostomi</taxon>
        <taxon>Mammalia</taxon>
        <taxon>Eutheria</taxon>
        <taxon>Euarchontoglires</taxon>
        <taxon>Glires</taxon>
        <taxon>Rodentia</taxon>
        <taxon>Myomorpha</taxon>
        <taxon>Muroidea</taxon>
        <taxon>Muridae</taxon>
        <taxon>Murinae</taxon>
        <taxon>Rattus</taxon>
    </lineage>
</organism>
<proteinExistence type="evidence at protein level"/>
<gene>
    <name type="primary">Id3</name>
    <name type="synonym">Id-3</name>
</gene>
<name>ID3_RAT</name>
<accession>P41138</accession>
<evidence type="ECO:0000250" key="1"/>
<evidence type="ECO:0000255" key="2">
    <source>
        <dbReference type="PROSITE-ProRule" id="PRU00981"/>
    </source>
</evidence>
<evidence type="ECO:0000269" key="3">
    <source>
    </source>
</evidence>
<keyword id="KW-0090">Biological rhythms</keyword>
<keyword id="KW-0517">Myogenesis</keyword>
<keyword id="KW-0539">Nucleus</keyword>
<keyword id="KW-0597">Phosphoprotein</keyword>
<keyword id="KW-1185">Reference proteome</keyword>
<keyword id="KW-0678">Repressor</keyword>
<keyword id="KW-0804">Transcription</keyword>
<keyword id="KW-0805">Transcription regulation</keyword>
<sequence>MKALSPVRGCYEAVCCLSERSLAIARGRGKSPSAEEPLSLLDDMNHCYSRLRELVPGVPRGTQLSQVEILQRVIDYILDLQVVLAEPAPGPPDGPHLPIQTAELTPELVISKDKRSFCH</sequence>
<comment type="function">
    <text evidence="1">Transcriptional regulator (lacking a basic DNA binding domain) which negatively regulates the basic helix-loop-helix (bHLH) transcription factors by forming heterodimers and inhibiting their DNA binding and transcriptional activity. Implicated in regulating a variety of cellular processes, including cellular growth, senescence, differentiation, apoptosis, angiogenesis, and neoplastic transformation. Involved in myogenesis by inhibiting skeletal muscle and cardiac myocyte differentiation and promoting muscle precursor cells proliferation. Inhibits the binding of E2A-containing protein complexes to muscle creatine kinase E-box enhancer. Regulates the circadian clock by repressing the transcriptional activator activity of the CLOCK-BMAL1 heterodimer (By similarity).</text>
</comment>
<comment type="subunit">
    <text evidence="1">Homodimer, and heterodimer with other HLH proteins. Interacts with COPS5 and COPS7A. Interacts with IFI204. Interacts with GATA4 and NKX2-5. Interacts with ANKRD2; both proteins cooperate in myoblast differentiation. Interacts with CLOCK and BMAL1 (By similarity).</text>
</comment>
<comment type="subcellular location">
    <subcellularLocation>
        <location>Nucleus</location>
    </subcellularLocation>
</comment>
<comment type="PTM">
    <text evidence="3">Phosphorylated in vitro by CDC2 and PKC.</text>
</comment>
<protein>
    <recommendedName>
        <fullName>DNA-binding protein inhibitor ID-3</fullName>
    </recommendedName>
    <alternativeName>
        <fullName>Inhibitor of DNA binding 3</fullName>
    </alternativeName>
    <alternativeName>
        <fullName>Inhibitor of differentiation 3</fullName>
    </alternativeName>
</protein>
<dbReference type="EMBL" id="D10864">
    <property type="protein sequence ID" value="BAA01635.1"/>
    <property type="molecule type" value="mRNA"/>
</dbReference>
<dbReference type="EMBL" id="BC064658">
    <property type="protein sequence ID" value="AAH64658.1"/>
    <property type="molecule type" value="mRNA"/>
</dbReference>
<dbReference type="PIR" id="JC2113">
    <property type="entry name" value="JC2113"/>
</dbReference>
<dbReference type="RefSeq" id="NP_001416281.1">
    <property type="nucleotide sequence ID" value="NM_001429352.1"/>
</dbReference>
<dbReference type="RefSeq" id="NP_037190.1">
    <property type="nucleotide sequence ID" value="NM_013058.3"/>
</dbReference>
<dbReference type="SMR" id="P41138"/>
<dbReference type="BioGRID" id="247615">
    <property type="interactions" value="4"/>
</dbReference>
<dbReference type="FunCoup" id="P41138">
    <property type="interactions" value="280"/>
</dbReference>
<dbReference type="STRING" id="10116.ENSRNOP00000035270"/>
<dbReference type="PhosphoSitePlus" id="P41138"/>
<dbReference type="PaxDb" id="10116-ENSRNOP00000035270"/>
<dbReference type="Ensembl" id="ENSRNOT00000035788.6">
    <property type="protein sequence ID" value="ENSRNOP00000035270.3"/>
    <property type="gene ID" value="ENSRNOG00000026124.6"/>
</dbReference>
<dbReference type="GeneID" id="25585"/>
<dbReference type="KEGG" id="rno:25585"/>
<dbReference type="UCSC" id="RGD:2860">
    <property type="organism name" value="rat"/>
</dbReference>
<dbReference type="AGR" id="RGD:2860"/>
<dbReference type="CTD" id="3399"/>
<dbReference type="RGD" id="2860">
    <property type="gene designation" value="Id3"/>
</dbReference>
<dbReference type="eggNOG" id="ENOG502S53I">
    <property type="taxonomic scope" value="Eukaryota"/>
</dbReference>
<dbReference type="GeneTree" id="ENSGT00940000160504"/>
<dbReference type="HOGENOM" id="CLU_116790_1_0_1"/>
<dbReference type="InParanoid" id="P41138"/>
<dbReference type="OMA" id="PARGCYE"/>
<dbReference type="OrthoDB" id="10047910at2759"/>
<dbReference type="PhylomeDB" id="P41138"/>
<dbReference type="TreeFam" id="TF326217"/>
<dbReference type="PRO" id="PR:P41138"/>
<dbReference type="Proteomes" id="UP000002494">
    <property type="component" value="Chromosome 5"/>
</dbReference>
<dbReference type="Bgee" id="ENSRNOG00000026124">
    <property type="expression patterns" value="Expressed in thymus and 19 other cell types or tissues"/>
</dbReference>
<dbReference type="GO" id="GO:0005737">
    <property type="term" value="C:cytoplasm"/>
    <property type="evidence" value="ECO:0000266"/>
    <property type="project" value="RGD"/>
</dbReference>
<dbReference type="GO" id="GO:0005634">
    <property type="term" value="C:nucleus"/>
    <property type="evidence" value="ECO:0000266"/>
    <property type="project" value="RGD"/>
</dbReference>
<dbReference type="GO" id="GO:0043425">
    <property type="term" value="F:bHLH transcription factor binding"/>
    <property type="evidence" value="ECO:0000266"/>
    <property type="project" value="RGD"/>
</dbReference>
<dbReference type="GO" id="GO:1901707">
    <property type="term" value="F:leptomycin B binding"/>
    <property type="evidence" value="ECO:0000266"/>
    <property type="project" value="RGD"/>
</dbReference>
<dbReference type="GO" id="GO:0046983">
    <property type="term" value="F:protein dimerization activity"/>
    <property type="evidence" value="ECO:0007669"/>
    <property type="project" value="InterPro"/>
</dbReference>
<dbReference type="GO" id="GO:0019904">
    <property type="term" value="F:protein domain specific binding"/>
    <property type="evidence" value="ECO:0000266"/>
    <property type="project" value="RGD"/>
</dbReference>
<dbReference type="GO" id="GO:0003714">
    <property type="term" value="F:transcription corepressor activity"/>
    <property type="evidence" value="ECO:0000318"/>
    <property type="project" value="GO_Central"/>
</dbReference>
<dbReference type="GO" id="GO:0140416">
    <property type="term" value="F:transcription regulator inhibitor activity"/>
    <property type="evidence" value="ECO:0000266"/>
    <property type="project" value="RGD"/>
</dbReference>
<dbReference type="GO" id="GO:0072750">
    <property type="term" value="P:cellular response to leptomycin B"/>
    <property type="evidence" value="ECO:0000266"/>
    <property type="project" value="RGD"/>
</dbReference>
<dbReference type="GO" id="GO:0007417">
    <property type="term" value="P:central nervous system development"/>
    <property type="evidence" value="ECO:0000266"/>
    <property type="project" value="RGD"/>
</dbReference>
<dbReference type="GO" id="GO:0007623">
    <property type="term" value="P:circadian rhythm"/>
    <property type="evidence" value="ECO:0000266"/>
    <property type="project" value="RGD"/>
</dbReference>
<dbReference type="GO" id="GO:0030855">
    <property type="term" value="P:epithelial cell differentiation"/>
    <property type="evidence" value="ECO:0000266"/>
    <property type="project" value="RGD"/>
</dbReference>
<dbReference type="GO" id="GO:0007507">
    <property type="term" value="P:heart development"/>
    <property type="evidence" value="ECO:0000266"/>
    <property type="project" value="RGD"/>
</dbReference>
<dbReference type="GO" id="GO:0001656">
    <property type="term" value="P:metanephros development"/>
    <property type="evidence" value="ECO:0000266"/>
    <property type="project" value="RGD"/>
</dbReference>
<dbReference type="GO" id="GO:0007517">
    <property type="term" value="P:muscle organ development"/>
    <property type="evidence" value="ECO:0007669"/>
    <property type="project" value="UniProtKB-KW"/>
</dbReference>
<dbReference type="GO" id="GO:0045596">
    <property type="term" value="P:negative regulation of cell differentiation"/>
    <property type="evidence" value="ECO:0000304"/>
    <property type="project" value="RGD"/>
</dbReference>
<dbReference type="GO" id="GO:0045892">
    <property type="term" value="P:negative regulation of DNA-templated transcription"/>
    <property type="evidence" value="ECO:0000250"/>
    <property type="project" value="UniProtKB"/>
</dbReference>
<dbReference type="GO" id="GO:0010629">
    <property type="term" value="P:negative regulation of gene expression"/>
    <property type="evidence" value="ECO:0000266"/>
    <property type="project" value="RGD"/>
</dbReference>
<dbReference type="GO" id="GO:0045662">
    <property type="term" value="P:negative regulation of myoblast differentiation"/>
    <property type="evidence" value="ECO:0000266"/>
    <property type="project" value="RGD"/>
</dbReference>
<dbReference type="GO" id="GO:0045668">
    <property type="term" value="P:negative regulation of osteoblast differentiation"/>
    <property type="evidence" value="ECO:0000266"/>
    <property type="project" value="RGD"/>
</dbReference>
<dbReference type="GO" id="GO:0000122">
    <property type="term" value="P:negative regulation of transcription by RNA polymerase II"/>
    <property type="evidence" value="ECO:0000266"/>
    <property type="project" value="RGD"/>
</dbReference>
<dbReference type="GO" id="GO:0030182">
    <property type="term" value="P:neuron differentiation"/>
    <property type="evidence" value="ECO:0000270"/>
    <property type="project" value="RGD"/>
</dbReference>
<dbReference type="GO" id="GO:0030903">
    <property type="term" value="P:notochord development"/>
    <property type="evidence" value="ECO:0000266"/>
    <property type="project" value="RGD"/>
</dbReference>
<dbReference type="GO" id="GO:0042476">
    <property type="term" value="P:odontogenesis"/>
    <property type="evidence" value="ECO:0000266"/>
    <property type="project" value="RGD"/>
</dbReference>
<dbReference type="GO" id="GO:0043065">
    <property type="term" value="P:positive regulation of apoptotic process"/>
    <property type="evidence" value="ECO:0000315"/>
    <property type="project" value="RGD"/>
</dbReference>
<dbReference type="GO" id="GO:0008284">
    <property type="term" value="P:positive regulation of cell population proliferation"/>
    <property type="evidence" value="ECO:0000304"/>
    <property type="project" value="RGD"/>
</dbReference>
<dbReference type="GO" id="GO:0010628">
    <property type="term" value="P:positive regulation of gene expression"/>
    <property type="evidence" value="ECO:0000266"/>
    <property type="project" value="RGD"/>
</dbReference>
<dbReference type="GO" id="GO:0006275">
    <property type="term" value="P:regulation of DNA replication"/>
    <property type="evidence" value="ECO:0000315"/>
    <property type="project" value="RGD"/>
</dbReference>
<dbReference type="CDD" id="cd19693">
    <property type="entry name" value="bHLH_dnHLH_ID3"/>
    <property type="match status" value="1"/>
</dbReference>
<dbReference type="FunFam" id="4.10.280.10:FF:000039">
    <property type="entry name" value="DNA-binding protein inhibitor ID-3"/>
    <property type="match status" value="1"/>
</dbReference>
<dbReference type="Gene3D" id="4.10.280.10">
    <property type="entry name" value="Helix-loop-helix DNA-binding domain"/>
    <property type="match status" value="1"/>
</dbReference>
<dbReference type="InterPro" id="IPR011598">
    <property type="entry name" value="bHLH_dom"/>
</dbReference>
<dbReference type="InterPro" id="IPR026052">
    <property type="entry name" value="DNA-bd_prot-inh"/>
</dbReference>
<dbReference type="InterPro" id="IPR036638">
    <property type="entry name" value="HLH_DNA-bd_sf"/>
</dbReference>
<dbReference type="PANTHER" id="PTHR11723">
    <property type="entry name" value="DNA-BINDING PROTEIN INHIBITOR"/>
    <property type="match status" value="1"/>
</dbReference>
<dbReference type="PANTHER" id="PTHR11723:SF16">
    <property type="entry name" value="DNA-BINDING PROTEIN INHIBITOR ID-3"/>
    <property type="match status" value="1"/>
</dbReference>
<dbReference type="Pfam" id="PF00010">
    <property type="entry name" value="HLH"/>
    <property type="match status" value="1"/>
</dbReference>
<dbReference type="SMART" id="SM00353">
    <property type="entry name" value="HLH"/>
    <property type="match status" value="1"/>
</dbReference>
<dbReference type="SUPFAM" id="SSF47459">
    <property type="entry name" value="HLH, helix-loop-helix DNA-binding domain"/>
    <property type="match status" value="1"/>
</dbReference>
<dbReference type="PROSITE" id="PS50888">
    <property type="entry name" value="BHLH"/>
    <property type="match status" value="1"/>
</dbReference>
<reference key="1">
    <citation type="journal article" date="1994" name="Biochem. Biophys. Res. Commun.">
        <title>Activation of helix-loop-helix proteins Id1, Id2 and Id3 during neural differentiation.</title>
        <authorList>
            <person name="Nagata Y."/>
            <person name="Todokoro K."/>
        </authorList>
    </citation>
    <scope>NUCLEOTIDE SEQUENCE [MRNA]</scope>
</reference>
<reference key="2">
    <citation type="journal article" date="2004" name="Genome Res.">
        <title>The status, quality, and expansion of the NIH full-length cDNA project: the Mammalian Gene Collection (MGC).</title>
        <authorList>
            <consortium name="The MGC Project Team"/>
        </authorList>
    </citation>
    <scope>NUCLEOTIDE SEQUENCE [LARGE SCALE MRNA]</scope>
    <source>
        <tissue>Prostate</tissue>
    </source>
</reference>
<reference key="3">
    <citation type="journal article" date="1995" name="Biochem. Biophys. Res. Commun.">
        <title>Phosphorylation of helix-loop-helix proteins ID1, ID2 and ID3.</title>
        <authorList>
            <person name="Nagata Y."/>
            <person name="Shoji W."/>
            <person name="Obinata M."/>
            <person name="Todokoro K."/>
        </authorList>
    </citation>
    <scope>PHOSPHORYLATION</scope>
</reference>